<dbReference type="EMBL" id="AE005174">
    <property type="protein sequence ID" value="AAG59126.1"/>
    <property type="molecule type" value="Genomic_DNA"/>
</dbReference>
<dbReference type="EMBL" id="BA000007">
    <property type="protein sequence ID" value="BAB38281.1"/>
    <property type="molecule type" value="Genomic_DNA"/>
</dbReference>
<dbReference type="PIR" id="B86083">
    <property type="entry name" value="B86083"/>
</dbReference>
<dbReference type="PIR" id="B91236">
    <property type="entry name" value="B91236"/>
</dbReference>
<dbReference type="RefSeq" id="NP_312885.1">
    <property type="nucleotide sequence ID" value="NC_002695.1"/>
</dbReference>
<dbReference type="RefSeq" id="WP_001293341.1">
    <property type="nucleotide sequence ID" value="NZ_VOAI01000016.1"/>
</dbReference>
<dbReference type="PDB" id="5JI2">
    <property type="method" value="X-ray"/>
    <property type="resolution" value="3.31 A"/>
    <property type="chains" value="E/F=2-443"/>
</dbReference>
<dbReference type="PDBsum" id="5JI2"/>
<dbReference type="SMR" id="P0A6H6"/>
<dbReference type="STRING" id="155864.Z5478"/>
<dbReference type="GeneID" id="915031"/>
<dbReference type="GeneID" id="93777967"/>
<dbReference type="KEGG" id="ece:Z5478"/>
<dbReference type="KEGG" id="ecs:ECs_4858"/>
<dbReference type="PATRIC" id="fig|386585.9.peg.5080"/>
<dbReference type="eggNOG" id="COG1220">
    <property type="taxonomic scope" value="Bacteria"/>
</dbReference>
<dbReference type="HOGENOM" id="CLU_033123_0_0_6"/>
<dbReference type="OMA" id="YGMIKTD"/>
<dbReference type="Proteomes" id="UP000000558">
    <property type="component" value="Chromosome"/>
</dbReference>
<dbReference type="Proteomes" id="UP000002519">
    <property type="component" value="Chromosome"/>
</dbReference>
<dbReference type="GO" id="GO:0009376">
    <property type="term" value="C:HslUV protease complex"/>
    <property type="evidence" value="ECO:0007669"/>
    <property type="project" value="UniProtKB-UniRule"/>
</dbReference>
<dbReference type="GO" id="GO:0005524">
    <property type="term" value="F:ATP binding"/>
    <property type="evidence" value="ECO:0007669"/>
    <property type="project" value="UniProtKB-UniRule"/>
</dbReference>
<dbReference type="GO" id="GO:0016887">
    <property type="term" value="F:ATP hydrolysis activity"/>
    <property type="evidence" value="ECO:0007669"/>
    <property type="project" value="InterPro"/>
</dbReference>
<dbReference type="GO" id="GO:0008233">
    <property type="term" value="F:peptidase activity"/>
    <property type="evidence" value="ECO:0007669"/>
    <property type="project" value="InterPro"/>
</dbReference>
<dbReference type="GO" id="GO:0036402">
    <property type="term" value="F:proteasome-activating activity"/>
    <property type="evidence" value="ECO:0007669"/>
    <property type="project" value="UniProtKB-UniRule"/>
</dbReference>
<dbReference type="GO" id="GO:0043335">
    <property type="term" value="P:protein unfolding"/>
    <property type="evidence" value="ECO:0007669"/>
    <property type="project" value="UniProtKB-UniRule"/>
</dbReference>
<dbReference type="GO" id="GO:0051603">
    <property type="term" value="P:proteolysis involved in protein catabolic process"/>
    <property type="evidence" value="ECO:0007669"/>
    <property type="project" value="TreeGrafter"/>
</dbReference>
<dbReference type="CDD" id="cd19498">
    <property type="entry name" value="RecA-like_HslU"/>
    <property type="match status" value="1"/>
</dbReference>
<dbReference type="FunFam" id="1.10.8.10:FF:000012">
    <property type="entry name" value="ATP-dependent protease ATPase subunit HslU"/>
    <property type="match status" value="1"/>
</dbReference>
<dbReference type="FunFam" id="1.10.8.10:FF:000028">
    <property type="entry name" value="ATP-dependent protease ATPase subunit HslU"/>
    <property type="match status" value="1"/>
</dbReference>
<dbReference type="FunFam" id="1.10.8.60:FF:000027">
    <property type="entry name" value="ATP-dependent protease ATPase subunit HslU"/>
    <property type="match status" value="1"/>
</dbReference>
<dbReference type="FunFam" id="3.40.50.300:FF:000213">
    <property type="entry name" value="ATP-dependent protease ATPase subunit HslU"/>
    <property type="match status" value="1"/>
</dbReference>
<dbReference type="FunFam" id="3.40.50.300:FF:000220">
    <property type="entry name" value="ATP-dependent protease ATPase subunit HslU"/>
    <property type="match status" value="1"/>
</dbReference>
<dbReference type="Gene3D" id="1.10.8.60">
    <property type="match status" value="1"/>
</dbReference>
<dbReference type="Gene3D" id="1.10.8.10">
    <property type="entry name" value="DNA helicase RuvA subunit, C-terminal domain"/>
    <property type="match status" value="2"/>
</dbReference>
<dbReference type="Gene3D" id="3.40.50.300">
    <property type="entry name" value="P-loop containing nucleotide triphosphate hydrolases"/>
    <property type="match status" value="1"/>
</dbReference>
<dbReference type="HAMAP" id="MF_00249">
    <property type="entry name" value="HslU"/>
    <property type="match status" value="1"/>
</dbReference>
<dbReference type="InterPro" id="IPR003593">
    <property type="entry name" value="AAA+_ATPase"/>
</dbReference>
<dbReference type="InterPro" id="IPR050052">
    <property type="entry name" value="ATP-dep_Clp_protease_ClpX"/>
</dbReference>
<dbReference type="InterPro" id="IPR003959">
    <property type="entry name" value="ATPase_AAA_core"/>
</dbReference>
<dbReference type="InterPro" id="IPR019489">
    <property type="entry name" value="Clp_ATPase_C"/>
</dbReference>
<dbReference type="InterPro" id="IPR004491">
    <property type="entry name" value="HslU"/>
</dbReference>
<dbReference type="InterPro" id="IPR027417">
    <property type="entry name" value="P-loop_NTPase"/>
</dbReference>
<dbReference type="NCBIfam" id="TIGR00390">
    <property type="entry name" value="hslU"/>
    <property type="match status" value="1"/>
</dbReference>
<dbReference type="NCBIfam" id="NF003544">
    <property type="entry name" value="PRK05201.1"/>
    <property type="match status" value="1"/>
</dbReference>
<dbReference type="PANTHER" id="PTHR48102">
    <property type="entry name" value="ATP-DEPENDENT CLP PROTEASE ATP-BINDING SUBUNIT CLPX-LIKE, MITOCHONDRIAL-RELATED"/>
    <property type="match status" value="1"/>
</dbReference>
<dbReference type="PANTHER" id="PTHR48102:SF3">
    <property type="entry name" value="ATP-DEPENDENT PROTEASE ATPASE SUBUNIT HSLU"/>
    <property type="match status" value="1"/>
</dbReference>
<dbReference type="Pfam" id="PF00004">
    <property type="entry name" value="AAA"/>
    <property type="match status" value="1"/>
</dbReference>
<dbReference type="Pfam" id="PF07724">
    <property type="entry name" value="AAA_2"/>
    <property type="match status" value="1"/>
</dbReference>
<dbReference type="SMART" id="SM00382">
    <property type="entry name" value="AAA"/>
    <property type="match status" value="1"/>
</dbReference>
<dbReference type="SMART" id="SM01086">
    <property type="entry name" value="ClpB_D2-small"/>
    <property type="match status" value="1"/>
</dbReference>
<dbReference type="SUPFAM" id="SSF52540">
    <property type="entry name" value="P-loop containing nucleoside triphosphate hydrolases"/>
    <property type="match status" value="1"/>
</dbReference>
<accession>P0A6H6</accession>
<accession>P32168</accession>
<protein>
    <recommendedName>
        <fullName evidence="1">ATP-dependent protease ATPase subunit HslU</fullName>
    </recommendedName>
    <alternativeName>
        <fullName evidence="1">Heat shock protein HslU</fullName>
    </alternativeName>
    <alternativeName>
        <fullName evidence="1">Unfoldase HslU</fullName>
    </alternativeName>
</protein>
<feature type="chain" id="PRO_0000160501" description="ATP-dependent protease ATPase subunit HslU">
    <location>
        <begin position="1"/>
        <end position="443"/>
    </location>
</feature>
<feature type="binding site" evidence="1">
    <location>
        <position position="18"/>
    </location>
    <ligand>
        <name>ATP</name>
        <dbReference type="ChEBI" id="CHEBI:30616"/>
    </ligand>
</feature>
<feature type="binding site" evidence="1">
    <location>
        <begin position="60"/>
        <end position="65"/>
    </location>
    <ligand>
        <name>ATP</name>
        <dbReference type="ChEBI" id="CHEBI:30616"/>
    </ligand>
</feature>
<feature type="binding site" evidence="1">
    <location>
        <position position="256"/>
    </location>
    <ligand>
        <name>ATP</name>
        <dbReference type="ChEBI" id="CHEBI:30616"/>
    </ligand>
</feature>
<feature type="binding site" evidence="1">
    <location>
        <position position="321"/>
    </location>
    <ligand>
        <name>ATP</name>
        <dbReference type="ChEBI" id="CHEBI:30616"/>
    </ligand>
</feature>
<feature type="binding site" evidence="1">
    <location>
        <position position="393"/>
    </location>
    <ligand>
        <name>ATP</name>
        <dbReference type="ChEBI" id="CHEBI:30616"/>
    </ligand>
</feature>
<feature type="helix" evidence="2">
    <location>
        <begin position="6"/>
        <end position="13"/>
    </location>
</feature>
<feature type="turn" evidence="2">
    <location>
        <begin position="14"/>
        <end position="16"/>
    </location>
</feature>
<feature type="helix" evidence="2">
    <location>
        <begin position="21"/>
        <end position="38"/>
    </location>
</feature>
<feature type="helix" evidence="2">
    <location>
        <begin position="42"/>
        <end position="47"/>
    </location>
</feature>
<feature type="strand" evidence="2">
    <location>
        <begin position="53"/>
        <end position="57"/>
    </location>
</feature>
<feature type="helix" evidence="2">
    <location>
        <begin position="63"/>
        <end position="74"/>
    </location>
</feature>
<feature type="strand" evidence="2">
    <location>
        <begin position="80"/>
        <end position="82"/>
    </location>
</feature>
<feature type="helix" evidence="2">
    <location>
        <begin position="83"/>
        <end position="86"/>
    </location>
</feature>
<feature type="helix" evidence="2">
    <location>
        <begin position="98"/>
        <end position="135"/>
    </location>
</feature>
<feature type="helix" evidence="2">
    <location>
        <begin position="154"/>
        <end position="164"/>
    </location>
</feature>
<feature type="helix" evidence="2">
    <location>
        <begin position="221"/>
        <end position="233"/>
    </location>
</feature>
<feature type="helix" evidence="2">
    <location>
        <begin position="236"/>
        <end position="250"/>
    </location>
</feature>
<feature type="strand" evidence="2">
    <location>
        <begin position="252"/>
        <end position="256"/>
    </location>
</feature>
<feature type="helix" evidence="2">
    <location>
        <begin position="258"/>
        <end position="261"/>
    </location>
</feature>
<feature type="helix" evidence="2">
    <location>
        <begin position="269"/>
        <end position="286"/>
    </location>
</feature>
<feature type="strand" evidence="2">
    <location>
        <begin position="289"/>
        <end position="292"/>
    </location>
</feature>
<feature type="strand" evidence="2">
    <location>
        <begin position="295"/>
        <end position="298"/>
    </location>
</feature>
<feature type="strand" evidence="2">
    <location>
        <begin position="303"/>
        <end position="308"/>
    </location>
</feature>
<feature type="strand" evidence="2">
    <location>
        <begin position="311"/>
        <end position="313"/>
    </location>
</feature>
<feature type="helix" evidence="2">
    <location>
        <begin position="315"/>
        <end position="317"/>
    </location>
</feature>
<feature type="helix" evidence="2">
    <location>
        <begin position="320"/>
        <end position="323"/>
    </location>
</feature>
<feature type="strand" evidence="2">
    <location>
        <begin position="328"/>
        <end position="331"/>
    </location>
</feature>
<feature type="helix" evidence="2">
    <location>
        <begin position="337"/>
        <end position="345"/>
    </location>
</feature>
<feature type="helix" evidence="2">
    <location>
        <begin position="351"/>
        <end position="361"/>
    </location>
</feature>
<feature type="helix" evidence="2">
    <location>
        <begin position="370"/>
        <end position="386"/>
    </location>
</feature>
<feature type="helix" evidence="2">
    <location>
        <begin position="393"/>
        <end position="409"/>
    </location>
</feature>
<feature type="turn" evidence="2">
    <location>
        <begin position="410"/>
        <end position="415"/>
    </location>
</feature>
<feature type="helix" evidence="2">
    <location>
        <begin position="422"/>
        <end position="434"/>
    </location>
</feature>
<feature type="helix" evidence="2">
    <location>
        <begin position="436"/>
        <end position="442"/>
    </location>
</feature>
<comment type="function">
    <text evidence="1">ATPase subunit of a proteasome-like degradation complex; this subunit has chaperone activity. The binding of ATP and its subsequent hydrolysis by HslU are essential for unfolding of protein substrates subsequently hydrolyzed by HslV. HslU recognizes the N-terminal part of its protein substrates and unfolds these before they are guided to HslV for hydrolysis.</text>
</comment>
<comment type="subunit">
    <text evidence="1">A double ring-shaped homohexamer of HslV is capped on each side by a ring-shaped HslU homohexamer. The assembly of the HslU/HslV complex is dependent on binding of ATP.</text>
</comment>
<comment type="subcellular location">
    <subcellularLocation>
        <location evidence="1">Cytoplasm</location>
    </subcellularLocation>
</comment>
<comment type="induction">
    <text evidence="1">By heat shock.</text>
</comment>
<comment type="similarity">
    <text evidence="1">Belongs to the ClpX chaperone family. HslU subfamily.</text>
</comment>
<sequence length="443" mass="49594">MSEMTPREIVSELDKHIIGQDNAKRSVAIALRNRWRRMQLNEELRHEVTPKNILMIGPTGVGKTEIARRLAKLANAPFIKVEATKFTEVGYVGKEVDSIIRDLTDAAVKMVRVQAIEKNRYRAEELAEERILDVLIPPAKNNWGQTEQQQEPSAARQAFRKKLREGQLDDKEIEIDLAAAPMGVEIMAPPGMEEMTSQLQSMFQNLGGQKQKARKLKIKDAMKLLIEEEAAKLVNPEELKQDAIDAVEQHGIVFIDEIDKICKRGESSGPDVSREGVQRDLLPLVEGCTVSTKHGMVKTDHILFIASGAFQIAKPSDLIPELQGRLPIRVELQALTTSDFERILTEPNASITVQYKALMATEGVNIEFTDSGIKRIAEAAWQVNESTENIGARRLHTVLERLMEEISYDASDLSGQNITIDADYVSKHLDALVADEDLSRFIL</sequence>
<keyword id="KW-0002">3D-structure</keyword>
<keyword id="KW-0067">ATP-binding</keyword>
<keyword id="KW-0143">Chaperone</keyword>
<keyword id="KW-0963">Cytoplasm</keyword>
<keyword id="KW-0547">Nucleotide-binding</keyword>
<keyword id="KW-1185">Reference proteome</keyword>
<keyword id="KW-0346">Stress response</keyword>
<name>HSLU_ECO57</name>
<organism>
    <name type="scientific">Escherichia coli O157:H7</name>
    <dbReference type="NCBI Taxonomy" id="83334"/>
    <lineage>
        <taxon>Bacteria</taxon>
        <taxon>Pseudomonadati</taxon>
        <taxon>Pseudomonadota</taxon>
        <taxon>Gammaproteobacteria</taxon>
        <taxon>Enterobacterales</taxon>
        <taxon>Enterobacteriaceae</taxon>
        <taxon>Escherichia</taxon>
    </lineage>
</organism>
<gene>
    <name evidence="1" type="primary">hslU</name>
    <name type="synonym">htpI</name>
    <name type="ordered locus">Z5478</name>
    <name type="ordered locus">ECs4858</name>
</gene>
<evidence type="ECO:0000255" key="1">
    <source>
        <dbReference type="HAMAP-Rule" id="MF_00249"/>
    </source>
</evidence>
<evidence type="ECO:0007829" key="2">
    <source>
        <dbReference type="PDB" id="5JI2"/>
    </source>
</evidence>
<proteinExistence type="evidence at protein level"/>
<reference key="1">
    <citation type="journal article" date="2001" name="Nature">
        <title>Genome sequence of enterohaemorrhagic Escherichia coli O157:H7.</title>
        <authorList>
            <person name="Perna N.T."/>
            <person name="Plunkett G. III"/>
            <person name="Burland V."/>
            <person name="Mau B."/>
            <person name="Glasner J.D."/>
            <person name="Rose D.J."/>
            <person name="Mayhew G.F."/>
            <person name="Evans P.S."/>
            <person name="Gregor J."/>
            <person name="Kirkpatrick H.A."/>
            <person name="Posfai G."/>
            <person name="Hackett J."/>
            <person name="Klink S."/>
            <person name="Boutin A."/>
            <person name="Shao Y."/>
            <person name="Miller L."/>
            <person name="Grotbeck E.J."/>
            <person name="Davis N.W."/>
            <person name="Lim A."/>
            <person name="Dimalanta E.T."/>
            <person name="Potamousis K."/>
            <person name="Apodaca J."/>
            <person name="Anantharaman T.S."/>
            <person name="Lin J."/>
            <person name="Yen G."/>
            <person name="Schwartz D.C."/>
            <person name="Welch R.A."/>
            <person name="Blattner F.R."/>
        </authorList>
    </citation>
    <scope>NUCLEOTIDE SEQUENCE [LARGE SCALE GENOMIC DNA]</scope>
    <source>
        <strain>O157:H7 / EDL933 / ATCC 700927 / EHEC</strain>
    </source>
</reference>
<reference key="2">
    <citation type="journal article" date="2001" name="DNA Res.">
        <title>Complete genome sequence of enterohemorrhagic Escherichia coli O157:H7 and genomic comparison with a laboratory strain K-12.</title>
        <authorList>
            <person name="Hayashi T."/>
            <person name="Makino K."/>
            <person name="Ohnishi M."/>
            <person name="Kurokawa K."/>
            <person name="Ishii K."/>
            <person name="Yokoyama K."/>
            <person name="Han C.-G."/>
            <person name="Ohtsubo E."/>
            <person name="Nakayama K."/>
            <person name="Murata T."/>
            <person name="Tanaka M."/>
            <person name="Tobe T."/>
            <person name="Iida T."/>
            <person name="Takami H."/>
            <person name="Honda T."/>
            <person name="Sasakawa C."/>
            <person name="Ogasawara N."/>
            <person name="Yasunaga T."/>
            <person name="Kuhara S."/>
            <person name="Shiba T."/>
            <person name="Hattori M."/>
            <person name="Shinagawa H."/>
        </authorList>
    </citation>
    <scope>NUCLEOTIDE SEQUENCE [LARGE SCALE GENOMIC DNA]</scope>
    <source>
        <strain>O157:H7 / Sakai / RIMD 0509952 / EHEC</strain>
    </source>
</reference>